<feature type="signal peptide" evidence="4">
    <location>
        <begin position="1"/>
        <end position="24"/>
    </location>
</feature>
<feature type="chain" id="PRO_0000423492" description="L-cysteine S-thiosulfotransferase subunit SoxA">
    <location>
        <begin position="25"/>
        <end position="273"/>
    </location>
</feature>
<feature type="domain" description="Cytochrome c" evidence="3">
    <location>
        <begin position="162"/>
        <end position="273"/>
    </location>
</feature>
<feature type="active site" description="Cysteine persulfide intermediate" evidence="1">
    <location>
        <position position="234"/>
    </location>
</feature>
<feature type="binding site" description="covalent" evidence="1">
    <location>
        <position position="182"/>
    </location>
    <ligand>
        <name>heme</name>
        <dbReference type="ChEBI" id="CHEBI:30413"/>
    </ligand>
</feature>
<feature type="binding site" description="axial binding residue" evidence="1">
    <location>
        <position position="186"/>
    </location>
    <ligand>
        <name>heme</name>
        <dbReference type="ChEBI" id="CHEBI:30413"/>
    </ligand>
    <ligandPart>
        <name>Fe</name>
        <dbReference type="ChEBI" id="CHEBI:18248"/>
    </ligandPart>
</feature>
<feature type="binding site" evidence="2">
    <location>
        <position position="230"/>
    </location>
    <ligand>
        <name>substrate</name>
    </ligand>
</feature>
<feature type="binding site" description="axial binding residue" evidence="1">
    <location>
        <position position="234"/>
    </location>
    <ligand>
        <name>heme</name>
        <dbReference type="ChEBI" id="CHEBI:30413"/>
    </ligand>
    <ligandPart>
        <name>Fe</name>
        <dbReference type="ChEBI" id="CHEBI:18248"/>
    </ligandPart>
</feature>
<feature type="disulfide bond" evidence="1">
    <location>
        <begin position="74"/>
        <end position="110"/>
    </location>
</feature>
<protein>
    <recommendedName>
        <fullName evidence="6">L-cysteine S-thiosulfotransferase subunit SoxA</fullName>
        <ecNumber evidence="4">2.8.5.2</ecNumber>
    </recommendedName>
    <alternativeName>
        <fullName evidence="1">Cytochrome c551 subunit monoheme</fullName>
    </alternativeName>
    <alternativeName>
        <fullName evidence="5">Protein SoxA</fullName>
    </alternativeName>
    <alternativeName>
        <fullName evidence="1 7">SoxAX cytochrome complex subunit A</fullName>
    </alternativeName>
    <alternativeName>
        <fullName evidence="5">Sulfur oxidizing protein A</fullName>
    </alternativeName>
    <alternativeName>
        <fullName evidence="1">Thiosulfate-oxidizing multienzyme system protein SoxA</fullName>
        <shortName evidence="1">TOMES protein SoxA</shortName>
    </alternativeName>
</protein>
<evidence type="ECO:0000250" key="1">
    <source>
        <dbReference type="UniProtKB" id="D7A6E5"/>
    </source>
</evidence>
<evidence type="ECO:0000250" key="2">
    <source>
        <dbReference type="UniProtKB" id="Q939U1"/>
    </source>
</evidence>
<evidence type="ECO:0000255" key="3"/>
<evidence type="ECO:0000269" key="4">
    <source>
    </source>
</evidence>
<evidence type="ECO:0000303" key="5">
    <source>
    </source>
</evidence>
<evidence type="ECO:0000305" key="6"/>
<evidence type="ECO:0000312" key="7">
    <source>
        <dbReference type="EMBL" id="BAF34123.1"/>
    </source>
</evidence>
<organism>
    <name type="scientific">Hydrogenophilus thermoluteolus</name>
    <name type="common">Pseudomonas hydrogenothermophila</name>
    <dbReference type="NCBI Taxonomy" id="297"/>
    <lineage>
        <taxon>Bacteria</taxon>
        <taxon>Pseudomonadati</taxon>
        <taxon>Pseudomonadota</taxon>
        <taxon>Hydrogenophilia</taxon>
        <taxon>Hydrogenophilales</taxon>
        <taxon>Hydrogenophilaceae</taxon>
        <taxon>Hydrogenophilus</taxon>
    </lineage>
</organism>
<keyword id="KW-0903">Direct protein sequencing</keyword>
<keyword id="KW-1015">Disulfide bond</keyword>
<keyword id="KW-0249">Electron transport</keyword>
<keyword id="KW-0349">Heme</keyword>
<keyword id="KW-0408">Iron</keyword>
<keyword id="KW-0479">Metal-binding</keyword>
<keyword id="KW-0574">Periplasm</keyword>
<keyword id="KW-0732">Signal</keyword>
<keyword id="KW-0808">Transferase</keyword>
<keyword id="KW-0813">Transport</keyword>
<name>SOXA_HYDTE</name>
<proteinExistence type="evidence at protein level"/>
<reference evidence="6 7" key="1">
    <citation type="journal article" date="2007" name="Arch. Microbiol.">
        <title>Thiosulfate oxidation by a moderately thermophilic hydrogen-oxidizing bacterium, Hydrogenophilus thermoluteolus.</title>
        <authorList>
            <person name="Miyake D."/>
            <person name="Ichiki S."/>
            <person name="Tanabe M."/>
            <person name="Oda T."/>
            <person name="Kuroda H."/>
            <person name="Nishihara H."/>
            <person name="Sambongi Y."/>
        </authorList>
    </citation>
    <scope>NUCLEOTIDE SEQUENCE [GENOMIC DNA]</scope>
    <scope>PROTEIN SEQUENCE OF 25-36</scope>
    <scope>FUNCTION</scope>
    <scope>CATALYTIC ACTIVITY</scope>
    <scope>COFACTOR</scope>
    <scope>SUBUNIT</scope>
    <scope>SUBCELLULAR LOCATION</scope>
    <scope>INDUCTION BY THIOSULFATE</scope>
    <scope>SIGNAL</scope>
    <source>
        <strain evidence="7">TH-1 / NBRC 14978</strain>
    </source>
</reference>
<comment type="function">
    <text evidence="1 4">C-type monoheme cytochrome, which is part of the SoxAX cytochrome complex involved in sulfur oxidation. The SoxAX complex catalyzes the formation of a heterodisulfide bond between the conserved cysteine residue on a sulfur carrier SoxYZ complex subunit SoxY and thiosulfate or other inorganic sulfur substrates. This leads to the liberation of two electrons, which may be transferred from the SoxAX complex to another cytochrome c that then channels them into the respiratory electron transport chain. Some electrons may be used for reductive CO(2) fixation.</text>
</comment>
<comment type="catalytic activity">
    <reaction evidence="4">
        <text>L-cysteinyl-[SoxY protein] + thiosulfate + 2 Fe(III)-[cytochrome c] = S-sulfosulfanyl-L-cysteinyl-[SoxY protein] + 2 Fe(II)-[cytochrome c] + 2 H(+)</text>
        <dbReference type="Rhea" id="RHEA:56720"/>
        <dbReference type="Rhea" id="RHEA-COMP:10350"/>
        <dbReference type="Rhea" id="RHEA-COMP:14328"/>
        <dbReference type="Rhea" id="RHEA-COMP:14399"/>
        <dbReference type="Rhea" id="RHEA-COMP:14691"/>
        <dbReference type="ChEBI" id="CHEBI:15378"/>
        <dbReference type="ChEBI" id="CHEBI:29033"/>
        <dbReference type="ChEBI" id="CHEBI:29034"/>
        <dbReference type="ChEBI" id="CHEBI:29950"/>
        <dbReference type="ChEBI" id="CHEBI:33542"/>
        <dbReference type="ChEBI" id="CHEBI:139321"/>
        <dbReference type="EC" id="2.8.5.2"/>
    </reaction>
</comment>
<comment type="catalytic activity">
    <reaction evidence="4">
        <text>S-sulfanyl-L-cysteinyl-[SoxY protein] + thiosulfate + 2 Fe(III)-[cytochrome c] = S-(2-sulfodisulfanyl)-L-cysteinyl-[SoxY protein] + 2 Fe(II)-[cytochrome c] + 2 H(+)</text>
        <dbReference type="Rhea" id="RHEA:51224"/>
        <dbReference type="Rhea" id="RHEA-COMP:10350"/>
        <dbReference type="Rhea" id="RHEA-COMP:14399"/>
        <dbReference type="Rhea" id="RHEA-COMP:14689"/>
        <dbReference type="Rhea" id="RHEA-COMP:14690"/>
        <dbReference type="ChEBI" id="CHEBI:15378"/>
        <dbReference type="ChEBI" id="CHEBI:29033"/>
        <dbReference type="ChEBI" id="CHEBI:29034"/>
        <dbReference type="ChEBI" id="CHEBI:33542"/>
        <dbReference type="ChEBI" id="CHEBI:61963"/>
        <dbReference type="ChEBI" id="CHEBI:140664"/>
        <dbReference type="EC" id="2.8.5.2"/>
    </reaction>
</comment>
<comment type="cofactor">
    <cofactor evidence="4">
        <name>heme</name>
        <dbReference type="ChEBI" id="CHEBI:30413"/>
    </cofactor>
    <text evidence="4">Binds 1 heme group per subunit.</text>
</comment>
<comment type="subunit">
    <text evidence="4">Heterodimer of SoxA and SoxX.</text>
</comment>
<comment type="subcellular location">
    <subcellularLocation>
        <location evidence="4">Periplasm</location>
    </subcellularLocation>
</comment>
<comment type="induction">
    <text evidence="4">By thiosulfate.</text>
</comment>
<comment type="PTM">
    <text evidence="1">Cysteine persulfide at Cys-234.</text>
</comment>
<comment type="similarity">
    <text evidence="3">Belongs to the SoxA family.</text>
</comment>
<gene>
    <name evidence="7" type="primary">soxA</name>
</gene>
<dbReference type="EC" id="2.8.5.2" evidence="4"/>
<dbReference type="EMBL" id="AB268546">
    <property type="protein sequence ID" value="BAF34123.1"/>
    <property type="molecule type" value="Genomic_DNA"/>
</dbReference>
<dbReference type="RefSeq" id="WP_119334858.1">
    <property type="nucleotide sequence ID" value="NZ_AP018558.1"/>
</dbReference>
<dbReference type="SMR" id="Q08IS0"/>
<dbReference type="OrthoDB" id="9808312at2"/>
<dbReference type="GO" id="GO:0070069">
    <property type="term" value="C:cytochrome complex"/>
    <property type="evidence" value="ECO:0000314"/>
    <property type="project" value="UniProtKB"/>
</dbReference>
<dbReference type="GO" id="GO:0042597">
    <property type="term" value="C:periplasmic space"/>
    <property type="evidence" value="ECO:0000314"/>
    <property type="project" value="UniProtKB"/>
</dbReference>
<dbReference type="GO" id="GO:0009055">
    <property type="term" value="F:electron transfer activity"/>
    <property type="evidence" value="ECO:0000314"/>
    <property type="project" value="UniProtKB"/>
</dbReference>
<dbReference type="GO" id="GO:0020037">
    <property type="term" value="F:heme binding"/>
    <property type="evidence" value="ECO:0000314"/>
    <property type="project" value="UniProtKB"/>
</dbReference>
<dbReference type="GO" id="GO:0005506">
    <property type="term" value="F:iron ion binding"/>
    <property type="evidence" value="ECO:0000314"/>
    <property type="project" value="UniProtKB"/>
</dbReference>
<dbReference type="GO" id="GO:0016491">
    <property type="term" value="F:oxidoreductase activity"/>
    <property type="evidence" value="ECO:0000314"/>
    <property type="project" value="UniProtKB"/>
</dbReference>
<dbReference type="GO" id="GO:0016669">
    <property type="term" value="F:oxidoreductase activity, acting on a sulfur group of donors, cytochrome as acceptor"/>
    <property type="evidence" value="ECO:0000314"/>
    <property type="project" value="UniProtKB"/>
</dbReference>
<dbReference type="GO" id="GO:0016740">
    <property type="term" value="F:transferase activity"/>
    <property type="evidence" value="ECO:0007669"/>
    <property type="project" value="UniProtKB-KW"/>
</dbReference>
<dbReference type="GO" id="GO:0019417">
    <property type="term" value="P:sulfur oxidation"/>
    <property type="evidence" value="ECO:0000314"/>
    <property type="project" value="UniProtKB"/>
</dbReference>
<dbReference type="FunFam" id="1.10.760.10:FF:000030">
    <property type="entry name" value="L-cysteine S-thiosulfotransferase subunit SoxA"/>
    <property type="match status" value="1"/>
</dbReference>
<dbReference type="FunFam" id="1.10.760.10:FF:000052">
    <property type="entry name" value="L-cysteine S-thiosulfotransferase subunit SoxA"/>
    <property type="match status" value="1"/>
</dbReference>
<dbReference type="Gene3D" id="1.10.760.10">
    <property type="entry name" value="Cytochrome c-like domain"/>
    <property type="match status" value="2"/>
</dbReference>
<dbReference type="InterPro" id="IPR009056">
    <property type="entry name" value="Cyt_c-like_dom"/>
</dbReference>
<dbReference type="InterPro" id="IPR036909">
    <property type="entry name" value="Cyt_c-like_dom_sf"/>
</dbReference>
<dbReference type="InterPro" id="IPR025710">
    <property type="entry name" value="SoxA"/>
</dbReference>
<dbReference type="NCBIfam" id="TIGR04484">
    <property type="entry name" value="thiosulf_SoxA"/>
    <property type="match status" value="1"/>
</dbReference>
<dbReference type="Pfam" id="PF21342">
    <property type="entry name" value="SoxA-TsdA_cyt-c"/>
    <property type="match status" value="1"/>
</dbReference>
<dbReference type="PIRSF" id="PIRSF038455">
    <property type="entry name" value="SoxA"/>
    <property type="match status" value="1"/>
</dbReference>
<dbReference type="SUPFAM" id="SSF46626">
    <property type="entry name" value="Cytochrome c"/>
    <property type="match status" value="2"/>
</dbReference>
<accession>Q08IS0</accession>
<sequence length="273" mass="30473">MKKTVTAVALLCALSSTAIAPTFAADDDEAARLKAIEEYRKQIADGNPSDLLAMEGEELWRTPYGPKNQSLEQCDLGLGPGVVKGAAAKLPRYFPDTGKVEDLESRLMTCMERLQGVERQKVIDSPWRKGEKLRMDKIVAYIVTESNGEKIDVDMSHPKMKEMYELGKRMFFYRTGPFDFSCATCHGKDGQRIRLQELPNLTKHEGAAAGWGSWPAYRVSNSQFWTMQMRLNDCFRQQRTAEPIYGSDATIALSVYMAANGNGGVMLTPGIKR</sequence>